<name>ECCB1_MYCTO</name>
<sequence length="480" mass="51093">MGLRLTTKVQVSGWRFLLRRLEHAIVRRDTRMFDDPLQFYSRSIALGIVVAVLILAGAALLAYFKPQGKLGGTSLFTDRATNQLYVLLSGQLHPVYNLTSARLVLGNPANPATVKSSELSKLPMGQTVGIPGAPYATPVSAGSTSIWTLCDTVARADSTSPVVQTAVIAMPLEIDASIDPLQSHEAVLVSYQGETWIVTTKGRHAIDLTDRALTSSMGIPVTARPTPISEGMFNALPDMGPWQLPPIPAAGAPNSLGLPDDLVIGSVFQIHTDKGPQYYVVLPDGIAQVNATTAAALRATQAHGLVAPPAMVPSLVVRIAERVYPSPLPDEPLKIVSRPQDPALCWSWQRSAGDQSPQSTVLSGRHLPISPSAMNMGIKQIHGTATVYLDGGKFVALQSPDPRYTESMYYIDPQGVRYGVPNAETAKSLGLSSPQNAPWEIVRLLVDGPVLSKDAALLEHDTLPADPSPRKVPAGASGAP</sequence>
<proteinExistence type="inferred from homology"/>
<organism>
    <name type="scientific">Mycobacterium tuberculosis (strain CDC 1551 / Oshkosh)</name>
    <dbReference type="NCBI Taxonomy" id="83331"/>
    <lineage>
        <taxon>Bacteria</taxon>
        <taxon>Bacillati</taxon>
        <taxon>Actinomycetota</taxon>
        <taxon>Actinomycetes</taxon>
        <taxon>Mycobacteriales</taxon>
        <taxon>Mycobacteriaceae</taxon>
        <taxon>Mycobacterium</taxon>
        <taxon>Mycobacterium tuberculosis complex</taxon>
    </lineage>
</organism>
<dbReference type="EC" id="3.6.-.-" evidence="4"/>
<dbReference type="EMBL" id="AE000516">
    <property type="protein sequence ID" value="AAK48350.1"/>
    <property type="molecule type" value="Genomic_DNA"/>
</dbReference>
<dbReference type="PIR" id="C70802">
    <property type="entry name" value="C70802"/>
</dbReference>
<dbReference type="RefSeq" id="WP_003399854.1">
    <property type="nucleotide sequence ID" value="NZ_KK341227.1"/>
</dbReference>
<dbReference type="SMR" id="P9WNR6"/>
<dbReference type="KEGG" id="mtc:MT3982"/>
<dbReference type="PATRIC" id="fig|83331.31.peg.4284"/>
<dbReference type="HOGENOM" id="CLU_036302_3_0_11"/>
<dbReference type="Proteomes" id="UP000001020">
    <property type="component" value="Chromosome"/>
</dbReference>
<dbReference type="GO" id="GO:0005576">
    <property type="term" value="C:extracellular region"/>
    <property type="evidence" value="ECO:0007669"/>
    <property type="project" value="TreeGrafter"/>
</dbReference>
<dbReference type="GO" id="GO:0005886">
    <property type="term" value="C:plasma membrane"/>
    <property type="evidence" value="ECO:0007669"/>
    <property type="project" value="UniProtKB-SubCell"/>
</dbReference>
<dbReference type="GO" id="GO:0005524">
    <property type="term" value="F:ATP binding"/>
    <property type="evidence" value="ECO:0007669"/>
    <property type="project" value="UniProtKB-KW"/>
</dbReference>
<dbReference type="GO" id="GO:0016787">
    <property type="term" value="F:hydrolase activity"/>
    <property type="evidence" value="ECO:0007669"/>
    <property type="project" value="UniProtKB-KW"/>
</dbReference>
<dbReference type="FunFam" id="2.40.50.910:FF:000001">
    <property type="entry name" value="ESX-1 secretion system ATPase EccB1"/>
    <property type="match status" value="1"/>
</dbReference>
<dbReference type="FunFam" id="3.30.2390.20:FF:000001">
    <property type="entry name" value="ESX-1 secretion system ATPase EccB1"/>
    <property type="match status" value="1"/>
</dbReference>
<dbReference type="Gene3D" id="3.30.2390.20">
    <property type="entry name" value="Type VII secretion system EccB, repeat 1 domain"/>
    <property type="match status" value="1"/>
</dbReference>
<dbReference type="Gene3D" id="2.40.50.910">
    <property type="entry name" value="Type VII secretion system EccB, repeat 3 domain"/>
    <property type="match status" value="1"/>
</dbReference>
<dbReference type="InterPro" id="IPR007795">
    <property type="entry name" value="T7SS_EccB"/>
</dbReference>
<dbReference type="InterPro" id="IPR044857">
    <property type="entry name" value="T7SS_EccB_R1"/>
</dbReference>
<dbReference type="InterPro" id="IPR042485">
    <property type="entry name" value="T7SS_EccB_R3"/>
</dbReference>
<dbReference type="NCBIfam" id="TIGR03919">
    <property type="entry name" value="T7SS_EccB"/>
    <property type="match status" value="1"/>
</dbReference>
<dbReference type="PANTHER" id="PTHR40765">
    <property type="entry name" value="ESX-2 SECRETION SYSTEM ATPASE ECCB2"/>
    <property type="match status" value="1"/>
</dbReference>
<dbReference type="PANTHER" id="PTHR40765:SF2">
    <property type="entry name" value="ESX-2 SECRETION SYSTEM ATPASE ECCB2"/>
    <property type="match status" value="1"/>
</dbReference>
<dbReference type="Pfam" id="PF05108">
    <property type="entry name" value="T7SS_ESX1_EccB"/>
    <property type="match status" value="1"/>
</dbReference>
<protein>
    <recommendedName>
        <fullName evidence="1">ESX-1 secretion system ATPase EccB1</fullName>
        <ecNumber evidence="4">3.6.-.-</ecNumber>
    </recommendedName>
    <alternativeName>
        <fullName evidence="1">ESX conserved component B1</fullName>
    </alternativeName>
    <alternativeName>
        <fullName evidence="1">Type VII secretion system protein EccB1</fullName>
        <shortName evidence="1">T7SS protein EccB1</shortName>
    </alternativeName>
</protein>
<comment type="function">
    <text evidence="1">An ATPase (By similarity). Part of the ESX-1 specialized secretion system, which delivers several virulence factors to host cells during infection, including the key virulence factors EsxA (ESAT-6) and EsxB (CFP-10).</text>
</comment>
<comment type="subunit">
    <text evidence="1">Part of the ESX-1 / type VII secretion system (T7SS), which is composed of cytosolic and membrane components. The ESX-1 membrane complex is composed of EccB1, EccCa1, EccCb1, EccD1 and EccE1.</text>
</comment>
<comment type="subcellular location">
    <subcellularLocation>
        <location evidence="1">Cell inner membrane</location>
        <topology evidence="2">Single-pass membrane protein</topology>
    </subcellularLocation>
</comment>
<comment type="similarity">
    <text evidence="4">Belongs to the EccB family.</text>
</comment>
<accession>P9WNR6</accession>
<accession>L0TDT4</accession>
<accession>O69734</accession>
<accession>Q7D4P7</accession>
<keyword id="KW-0067">ATP-binding</keyword>
<keyword id="KW-0997">Cell inner membrane</keyword>
<keyword id="KW-1003">Cell membrane</keyword>
<keyword id="KW-0378">Hydrolase</keyword>
<keyword id="KW-0472">Membrane</keyword>
<keyword id="KW-0547">Nucleotide-binding</keyword>
<keyword id="KW-1185">Reference proteome</keyword>
<keyword id="KW-0812">Transmembrane</keyword>
<keyword id="KW-1133">Transmembrane helix</keyword>
<keyword id="KW-0813">Transport</keyword>
<evidence type="ECO:0000250" key="1">
    <source>
        <dbReference type="UniProtKB" id="P9WNR7"/>
    </source>
</evidence>
<evidence type="ECO:0000255" key="2"/>
<evidence type="ECO:0000256" key="3">
    <source>
        <dbReference type="SAM" id="MobiDB-lite"/>
    </source>
</evidence>
<evidence type="ECO:0000305" key="4"/>
<gene>
    <name evidence="1" type="primary">eccB1</name>
    <name type="ordered locus">MT3982</name>
</gene>
<reference key="1">
    <citation type="journal article" date="2002" name="J. Bacteriol.">
        <title>Whole-genome comparison of Mycobacterium tuberculosis clinical and laboratory strains.</title>
        <authorList>
            <person name="Fleischmann R.D."/>
            <person name="Alland D."/>
            <person name="Eisen J.A."/>
            <person name="Carpenter L."/>
            <person name="White O."/>
            <person name="Peterson J.D."/>
            <person name="DeBoy R.T."/>
            <person name="Dodson R.J."/>
            <person name="Gwinn M.L."/>
            <person name="Haft D.H."/>
            <person name="Hickey E.K."/>
            <person name="Kolonay J.F."/>
            <person name="Nelson W.C."/>
            <person name="Umayam L.A."/>
            <person name="Ermolaeva M.D."/>
            <person name="Salzberg S.L."/>
            <person name="Delcher A."/>
            <person name="Utterback T.R."/>
            <person name="Weidman J.F."/>
            <person name="Khouri H.M."/>
            <person name="Gill J."/>
            <person name="Mikula A."/>
            <person name="Bishai W."/>
            <person name="Jacobs W.R. Jr."/>
            <person name="Venter J.C."/>
            <person name="Fraser C.M."/>
        </authorList>
    </citation>
    <scope>NUCLEOTIDE SEQUENCE [LARGE SCALE GENOMIC DNA]</scope>
    <source>
        <strain>CDC 1551 / Oshkosh</strain>
    </source>
</reference>
<feature type="chain" id="PRO_0000427080" description="ESX-1 secretion system ATPase EccB1">
    <location>
        <begin position="1"/>
        <end position="480"/>
    </location>
</feature>
<feature type="transmembrane region" description="Helical" evidence="2">
    <location>
        <begin position="44"/>
        <end position="64"/>
    </location>
</feature>
<feature type="region of interest" description="Disordered" evidence="3">
    <location>
        <begin position="461"/>
        <end position="480"/>
    </location>
</feature>